<organism>
    <name type="scientific">Prochlorococcus marinus (strain MIT 9515)</name>
    <dbReference type="NCBI Taxonomy" id="167542"/>
    <lineage>
        <taxon>Bacteria</taxon>
        <taxon>Bacillati</taxon>
        <taxon>Cyanobacteriota</taxon>
        <taxon>Cyanophyceae</taxon>
        <taxon>Synechococcales</taxon>
        <taxon>Prochlorococcaceae</taxon>
        <taxon>Prochlorococcus</taxon>
    </lineage>
</organism>
<sequence>MRILLAAAECAPMIKVGGMGDVVGSLPPSLIKLGHDVRVIIPGYGKLWNLLEISSEPVFRANTMGNEFSVYEAKHPIHNYIVYLVGHPTFDSGQIYGGEDEDWRFTFFASSTAEFSWNYWKPQVLHCHDWHTGMIPVWMHQDPEISTVFTIHNLKYQGPWRWKLEKMTWCPWYMHGDHTMAAAMLYADRVNAVSPTYADEIKTHEYGESLDGLLNYISGKLRGILNGIDLNEWDPNIDKVLPAQFNIKNLERRSENKIILQKEMGLEVNSKKYLLGMVSRLVDQKGVDLVLQVSKRLLAYTDSQIAILGTGDKYLESGLWQLALDYPGRFSVFLTYDDSLSRLIYGGSDAFLMPSRFEPCGISQLLAMRYGSIPIVRRVGGLVDTVLPHDPENNCGTGFCFDRFEPIDFYTALVRSWEAFRHKDSWKLLQIRAMSQEFSWQRSALEYELMYKDVCGIKEPSPDITEIEKFSYGQSADPSLKKI</sequence>
<feature type="chain" id="PRO_1000014376" description="Glycogen synthase">
    <location>
        <begin position="1"/>
        <end position="483"/>
    </location>
</feature>
<feature type="binding site" evidence="1">
    <location>
        <position position="15"/>
    </location>
    <ligand>
        <name>ADP-alpha-D-glucose</name>
        <dbReference type="ChEBI" id="CHEBI:57498"/>
    </ligand>
</feature>
<name>GLGA_PROM5</name>
<comment type="function">
    <text evidence="1">Synthesizes alpha-1,4-glucan chains using ADP-glucose.</text>
</comment>
<comment type="catalytic activity">
    <reaction evidence="1">
        <text>[(1-&gt;4)-alpha-D-glucosyl](n) + ADP-alpha-D-glucose = [(1-&gt;4)-alpha-D-glucosyl](n+1) + ADP + H(+)</text>
        <dbReference type="Rhea" id="RHEA:18189"/>
        <dbReference type="Rhea" id="RHEA-COMP:9584"/>
        <dbReference type="Rhea" id="RHEA-COMP:9587"/>
        <dbReference type="ChEBI" id="CHEBI:15378"/>
        <dbReference type="ChEBI" id="CHEBI:15444"/>
        <dbReference type="ChEBI" id="CHEBI:57498"/>
        <dbReference type="ChEBI" id="CHEBI:456216"/>
        <dbReference type="EC" id="2.4.1.21"/>
    </reaction>
</comment>
<comment type="pathway">
    <text evidence="1">Glycan biosynthesis; glycogen biosynthesis.</text>
</comment>
<comment type="similarity">
    <text evidence="1">Belongs to the glycosyltransferase 1 family. Bacterial/plant glycogen synthase subfamily.</text>
</comment>
<gene>
    <name evidence="1" type="primary">glgA</name>
    <name type="ordered locus">P9515_06741</name>
</gene>
<evidence type="ECO:0000255" key="1">
    <source>
        <dbReference type="HAMAP-Rule" id="MF_00484"/>
    </source>
</evidence>
<dbReference type="EC" id="2.4.1.21" evidence="1"/>
<dbReference type="EMBL" id="CP000552">
    <property type="protein sequence ID" value="ABM71883.1"/>
    <property type="molecule type" value="Genomic_DNA"/>
</dbReference>
<dbReference type="RefSeq" id="WP_011819988.1">
    <property type="nucleotide sequence ID" value="NC_008817.1"/>
</dbReference>
<dbReference type="SMR" id="A2BVS2"/>
<dbReference type="STRING" id="167542.P9515_06741"/>
<dbReference type="CAZy" id="GT5">
    <property type="family name" value="Glycosyltransferase Family 5"/>
</dbReference>
<dbReference type="GeneID" id="60200721"/>
<dbReference type="KEGG" id="pmc:P9515_06741"/>
<dbReference type="eggNOG" id="COG0297">
    <property type="taxonomic scope" value="Bacteria"/>
</dbReference>
<dbReference type="HOGENOM" id="CLU_009583_18_2_3"/>
<dbReference type="OrthoDB" id="9808590at2"/>
<dbReference type="UniPathway" id="UPA00164"/>
<dbReference type="Proteomes" id="UP000001589">
    <property type="component" value="Chromosome"/>
</dbReference>
<dbReference type="GO" id="GO:0009011">
    <property type="term" value="F:alpha-1,4-glucan glucosyltransferase (ADP-glucose donor) activity"/>
    <property type="evidence" value="ECO:0007669"/>
    <property type="project" value="UniProtKB-UniRule"/>
</dbReference>
<dbReference type="GO" id="GO:0004373">
    <property type="term" value="F:alpha-1,4-glucan glucosyltransferase (UDP-glucose donor) activity"/>
    <property type="evidence" value="ECO:0007669"/>
    <property type="project" value="InterPro"/>
</dbReference>
<dbReference type="GO" id="GO:0005978">
    <property type="term" value="P:glycogen biosynthetic process"/>
    <property type="evidence" value="ECO:0007669"/>
    <property type="project" value="UniProtKB-UniRule"/>
</dbReference>
<dbReference type="CDD" id="cd03791">
    <property type="entry name" value="GT5_Glycogen_synthase_DULL1-like"/>
    <property type="match status" value="1"/>
</dbReference>
<dbReference type="Gene3D" id="3.40.50.2000">
    <property type="entry name" value="Glycogen Phosphorylase B"/>
    <property type="match status" value="2"/>
</dbReference>
<dbReference type="HAMAP" id="MF_00484">
    <property type="entry name" value="Glycogen_synth"/>
    <property type="match status" value="1"/>
</dbReference>
<dbReference type="InterPro" id="IPR001296">
    <property type="entry name" value="Glyco_trans_1"/>
</dbReference>
<dbReference type="InterPro" id="IPR011835">
    <property type="entry name" value="GS/SS"/>
</dbReference>
<dbReference type="InterPro" id="IPR013534">
    <property type="entry name" value="Starch_synth_cat_dom"/>
</dbReference>
<dbReference type="NCBIfam" id="TIGR02095">
    <property type="entry name" value="glgA"/>
    <property type="match status" value="1"/>
</dbReference>
<dbReference type="NCBIfam" id="NF001900">
    <property type="entry name" value="PRK00654.1-3"/>
    <property type="match status" value="1"/>
</dbReference>
<dbReference type="PANTHER" id="PTHR45825:SF11">
    <property type="entry name" value="ALPHA AMYLASE DOMAIN-CONTAINING PROTEIN"/>
    <property type="match status" value="1"/>
</dbReference>
<dbReference type="PANTHER" id="PTHR45825">
    <property type="entry name" value="GRANULE-BOUND STARCH SYNTHASE 1, CHLOROPLASTIC/AMYLOPLASTIC"/>
    <property type="match status" value="1"/>
</dbReference>
<dbReference type="Pfam" id="PF08323">
    <property type="entry name" value="Glyco_transf_5"/>
    <property type="match status" value="1"/>
</dbReference>
<dbReference type="Pfam" id="PF00534">
    <property type="entry name" value="Glycos_transf_1"/>
    <property type="match status" value="1"/>
</dbReference>
<dbReference type="SUPFAM" id="SSF53756">
    <property type="entry name" value="UDP-Glycosyltransferase/glycogen phosphorylase"/>
    <property type="match status" value="1"/>
</dbReference>
<proteinExistence type="inferred from homology"/>
<protein>
    <recommendedName>
        <fullName evidence="1">Glycogen synthase</fullName>
        <ecNumber evidence="1">2.4.1.21</ecNumber>
    </recommendedName>
    <alternativeName>
        <fullName evidence="1">Starch [bacterial glycogen] synthase</fullName>
    </alternativeName>
</protein>
<accession>A2BVS2</accession>
<keyword id="KW-0320">Glycogen biosynthesis</keyword>
<keyword id="KW-0328">Glycosyltransferase</keyword>
<keyword id="KW-0808">Transferase</keyword>
<reference key="1">
    <citation type="journal article" date="2007" name="PLoS Genet.">
        <title>Patterns and implications of gene gain and loss in the evolution of Prochlorococcus.</title>
        <authorList>
            <person name="Kettler G.C."/>
            <person name="Martiny A.C."/>
            <person name="Huang K."/>
            <person name="Zucker J."/>
            <person name="Coleman M.L."/>
            <person name="Rodrigue S."/>
            <person name="Chen F."/>
            <person name="Lapidus A."/>
            <person name="Ferriera S."/>
            <person name="Johnson J."/>
            <person name="Steglich C."/>
            <person name="Church G.M."/>
            <person name="Richardson P."/>
            <person name="Chisholm S.W."/>
        </authorList>
    </citation>
    <scope>NUCLEOTIDE SEQUENCE [LARGE SCALE GENOMIC DNA]</scope>
    <source>
        <strain>MIT 9515</strain>
    </source>
</reference>